<evidence type="ECO:0000255" key="1">
    <source>
        <dbReference type="HAMAP-Rule" id="MF_00568"/>
    </source>
</evidence>
<organism>
    <name type="scientific">Sulfurisphaera tokodaii (strain DSM 16993 / JCM 10545 / NBRC 100140 / 7)</name>
    <name type="common">Sulfolobus tokodaii</name>
    <dbReference type="NCBI Taxonomy" id="273063"/>
    <lineage>
        <taxon>Archaea</taxon>
        <taxon>Thermoproteota</taxon>
        <taxon>Thermoprotei</taxon>
        <taxon>Sulfolobales</taxon>
        <taxon>Sulfolobaceae</taxon>
        <taxon>Sulfurisphaera</taxon>
    </lineage>
</organism>
<keyword id="KW-0004">4Fe-4S</keyword>
<keyword id="KW-0963">Cytoplasm</keyword>
<keyword id="KW-0408">Iron</keyword>
<keyword id="KW-0411">Iron-sulfur</keyword>
<keyword id="KW-0479">Metal-binding</keyword>
<keyword id="KW-0662">Pyridine nucleotide biosynthesis</keyword>
<keyword id="KW-1185">Reference proteome</keyword>
<keyword id="KW-0808">Transferase</keyword>
<comment type="function">
    <text evidence="1">Catalyzes the condensation of iminoaspartate with dihydroxyacetone phosphate to form quinolinate.</text>
</comment>
<comment type="catalytic activity">
    <reaction evidence="1">
        <text>iminosuccinate + dihydroxyacetone phosphate = quinolinate + phosphate + 2 H2O + H(+)</text>
        <dbReference type="Rhea" id="RHEA:25888"/>
        <dbReference type="ChEBI" id="CHEBI:15377"/>
        <dbReference type="ChEBI" id="CHEBI:15378"/>
        <dbReference type="ChEBI" id="CHEBI:29959"/>
        <dbReference type="ChEBI" id="CHEBI:43474"/>
        <dbReference type="ChEBI" id="CHEBI:57642"/>
        <dbReference type="ChEBI" id="CHEBI:77875"/>
        <dbReference type="EC" id="2.5.1.72"/>
    </reaction>
    <physiologicalReaction direction="left-to-right" evidence="1">
        <dbReference type="Rhea" id="RHEA:25889"/>
    </physiologicalReaction>
</comment>
<comment type="cofactor">
    <cofactor evidence="1">
        <name>[4Fe-4S] cluster</name>
        <dbReference type="ChEBI" id="CHEBI:49883"/>
    </cofactor>
    <text evidence="1">Binds 1 [4Fe-4S] cluster per subunit.</text>
</comment>
<comment type="pathway">
    <text evidence="1">Cofactor biosynthesis; NAD(+) biosynthesis; quinolinate from iminoaspartate: step 1/1.</text>
</comment>
<comment type="subcellular location">
    <subcellularLocation>
        <location evidence="1">Cytoplasm</location>
    </subcellularLocation>
</comment>
<comment type="similarity">
    <text evidence="1">Belongs to the quinolinate synthase family. Type 2 subfamily.</text>
</comment>
<proteinExistence type="inferred from homology"/>
<gene>
    <name evidence="1" type="primary">nadA</name>
    <name type="ordered locus">STK_11970</name>
</gene>
<feature type="chain" id="PRO_0000155813" description="Quinolinate synthase">
    <location>
        <begin position="1"/>
        <end position="308"/>
    </location>
</feature>
<feature type="binding site" evidence="1">
    <location>
        <position position="21"/>
    </location>
    <ligand>
        <name>iminosuccinate</name>
        <dbReference type="ChEBI" id="CHEBI:77875"/>
    </ligand>
</feature>
<feature type="binding site" evidence="1">
    <location>
        <position position="38"/>
    </location>
    <ligand>
        <name>iminosuccinate</name>
        <dbReference type="ChEBI" id="CHEBI:77875"/>
    </ligand>
</feature>
<feature type="binding site" evidence="1">
    <location>
        <position position="83"/>
    </location>
    <ligand>
        <name>[4Fe-4S] cluster</name>
        <dbReference type="ChEBI" id="CHEBI:49883"/>
    </ligand>
</feature>
<feature type="binding site" evidence="1">
    <location>
        <begin position="109"/>
        <end position="111"/>
    </location>
    <ligand>
        <name>iminosuccinate</name>
        <dbReference type="ChEBI" id="CHEBI:77875"/>
    </ligand>
</feature>
<feature type="binding site" evidence="1">
    <location>
        <position position="126"/>
    </location>
    <ligand>
        <name>iminosuccinate</name>
        <dbReference type="ChEBI" id="CHEBI:77875"/>
    </ligand>
</feature>
<feature type="binding site" evidence="1">
    <location>
        <position position="170"/>
    </location>
    <ligand>
        <name>[4Fe-4S] cluster</name>
        <dbReference type="ChEBI" id="CHEBI:49883"/>
    </ligand>
</feature>
<feature type="binding site" evidence="1">
    <location>
        <begin position="196"/>
        <end position="198"/>
    </location>
    <ligand>
        <name>iminosuccinate</name>
        <dbReference type="ChEBI" id="CHEBI:77875"/>
    </ligand>
</feature>
<feature type="binding site" evidence="1">
    <location>
        <position position="213"/>
    </location>
    <ligand>
        <name>iminosuccinate</name>
        <dbReference type="ChEBI" id="CHEBI:77875"/>
    </ligand>
</feature>
<feature type="binding site" evidence="1">
    <location>
        <position position="263"/>
    </location>
    <ligand>
        <name>[4Fe-4S] cluster</name>
        <dbReference type="ChEBI" id="CHEBI:49883"/>
    </ligand>
</feature>
<protein>
    <recommendedName>
        <fullName evidence="1">Quinolinate synthase</fullName>
        <ecNumber evidence="1">2.5.1.72</ecNumber>
    </recommendedName>
</protein>
<name>NADA_SULTO</name>
<sequence>MELIKEIKNLKRNKNAIILGHNYMEYGVQLVSDFTGDSYDLAVKAMKTNADIIVFAGVYFMAEQAAALNPDKKVLSPDPNAGCSLSDSLDVDTLKKYKEMYPNAPVVLYINTSIYTKALADYIVTSSTAIKVVKSLDADTIIFGPDANLANYVERKTGKRLVKVPPNGRCIVHANYTRQLVELARKKYPNAILMAHPESPLEILEASDFVGSTNQMIKFAKESPYKEFIVATELGMINALKLQVPEKTFYPLVTTEAYACARCPYMAMITLEKIKRSLEEEIYEVKVPKDIAERAKEAFERTMRLLNN</sequence>
<reference key="1">
    <citation type="journal article" date="2001" name="DNA Res.">
        <title>Complete genome sequence of an aerobic thermoacidophilic Crenarchaeon, Sulfolobus tokodaii strain7.</title>
        <authorList>
            <person name="Kawarabayasi Y."/>
            <person name="Hino Y."/>
            <person name="Horikawa H."/>
            <person name="Jin-no K."/>
            <person name="Takahashi M."/>
            <person name="Sekine M."/>
            <person name="Baba S."/>
            <person name="Ankai A."/>
            <person name="Kosugi H."/>
            <person name="Hosoyama A."/>
            <person name="Fukui S."/>
            <person name="Nagai Y."/>
            <person name="Nishijima K."/>
            <person name="Otsuka R."/>
            <person name="Nakazawa H."/>
            <person name="Takamiya M."/>
            <person name="Kato Y."/>
            <person name="Yoshizawa T."/>
            <person name="Tanaka T."/>
            <person name="Kudoh Y."/>
            <person name="Yamazaki J."/>
            <person name="Kushida N."/>
            <person name="Oguchi A."/>
            <person name="Aoki K."/>
            <person name="Masuda S."/>
            <person name="Yanagii M."/>
            <person name="Nishimura M."/>
            <person name="Yamagishi A."/>
            <person name="Oshima T."/>
            <person name="Kikuchi H."/>
        </authorList>
    </citation>
    <scope>NUCLEOTIDE SEQUENCE [LARGE SCALE GENOMIC DNA]</scope>
    <source>
        <strain>DSM 16993 / JCM 10545 / NBRC 100140 / 7</strain>
    </source>
</reference>
<dbReference type="EC" id="2.5.1.72" evidence="1"/>
<dbReference type="EMBL" id="BA000023">
    <property type="protein sequence ID" value="BAK54477.1"/>
    <property type="molecule type" value="Genomic_DNA"/>
</dbReference>
<dbReference type="SMR" id="Q972D1"/>
<dbReference type="STRING" id="273063.STK_11970"/>
<dbReference type="KEGG" id="sto:STK_11970"/>
<dbReference type="PATRIC" id="fig|273063.9.peg.1353"/>
<dbReference type="eggNOG" id="arCOG04459">
    <property type="taxonomic scope" value="Archaea"/>
</dbReference>
<dbReference type="UniPathway" id="UPA00253">
    <property type="reaction ID" value="UER00327"/>
</dbReference>
<dbReference type="Proteomes" id="UP000001015">
    <property type="component" value="Chromosome"/>
</dbReference>
<dbReference type="GO" id="GO:0005737">
    <property type="term" value="C:cytoplasm"/>
    <property type="evidence" value="ECO:0007669"/>
    <property type="project" value="UniProtKB-SubCell"/>
</dbReference>
<dbReference type="GO" id="GO:0051539">
    <property type="term" value="F:4 iron, 4 sulfur cluster binding"/>
    <property type="evidence" value="ECO:0007669"/>
    <property type="project" value="UniProtKB-KW"/>
</dbReference>
<dbReference type="GO" id="GO:0046872">
    <property type="term" value="F:metal ion binding"/>
    <property type="evidence" value="ECO:0007669"/>
    <property type="project" value="UniProtKB-KW"/>
</dbReference>
<dbReference type="GO" id="GO:0008987">
    <property type="term" value="F:quinolinate synthetase A activity"/>
    <property type="evidence" value="ECO:0007669"/>
    <property type="project" value="UniProtKB-UniRule"/>
</dbReference>
<dbReference type="GO" id="GO:0034628">
    <property type="term" value="P:'de novo' NAD biosynthetic process from L-aspartate"/>
    <property type="evidence" value="ECO:0007669"/>
    <property type="project" value="TreeGrafter"/>
</dbReference>
<dbReference type="FunFam" id="3.40.50.10800:FF:000001">
    <property type="entry name" value="Quinolinate synthase A"/>
    <property type="match status" value="1"/>
</dbReference>
<dbReference type="Gene3D" id="3.40.50.10800">
    <property type="entry name" value="NadA-like"/>
    <property type="match status" value="3"/>
</dbReference>
<dbReference type="HAMAP" id="MF_00568">
    <property type="entry name" value="NadA_type2"/>
    <property type="match status" value="1"/>
</dbReference>
<dbReference type="InterPro" id="IPR003473">
    <property type="entry name" value="NadA"/>
</dbReference>
<dbReference type="InterPro" id="IPR036094">
    <property type="entry name" value="NadA_sf"/>
</dbReference>
<dbReference type="InterPro" id="IPR023066">
    <property type="entry name" value="Quinolinate_synth_type2"/>
</dbReference>
<dbReference type="NCBIfam" id="TIGR00550">
    <property type="entry name" value="nadA"/>
    <property type="match status" value="1"/>
</dbReference>
<dbReference type="NCBIfam" id="NF006878">
    <property type="entry name" value="PRK09375.1-2"/>
    <property type="match status" value="1"/>
</dbReference>
<dbReference type="PANTHER" id="PTHR30573:SF0">
    <property type="entry name" value="QUINOLINATE SYNTHASE, CHLOROPLASTIC"/>
    <property type="match status" value="1"/>
</dbReference>
<dbReference type="PANTHER" id="PTHR30573">
    <property type="entry name" value="QUINOLINATE SYNTHETASE A"/>
    <property type="match status" value="1"/>
</dbReference>
<dbReference type="Pfam" id="PF02445">
    <property type="entry name" value="NadA"/>
    <property type="match status" value="1"/>
</dbReference>
<dbReference type="SUPFAM" id="SSF142754">
    <property type="entry name" value="NadA-like"/>
    <property type="match status" value="1"/>
</dbReference>
<accession>Q972D1</accession>
<accession>F9VNW9</accession>